<reference key="1">
    <citation type="journal article" date="1986" name="J. Biol. Chem.">
        <title>Nucleotide sequence of Escherichia coli pyrG encoding CTP synthetase.</title>
        <authorList>
            <person name="Weng M."/>
            <person name="Makaroff C.A."/>
            <person name="Zalkin H."/>
        </authorList>
    </citation>
    <scope>NUCLEOTIDE SEQUENCE [GENOMIC DNA]</scope>
    <scope>DOMAIN</scope>
</reference>
<reference key="2">
    <citation type="journal article" date="1997" name="Science">
        <title>The complete genome sequence of Escherichia coli K-12.</title>
        <authorList>
            <person name="Blattner F.R."/>
            <person name="Plunkett G. III"/>
            <person name="Bloch C.A."/>
            <person name="Perna N.T."/>
            <person name="Burland V."/>
            <person name="Riley M."/>
            <person name="Collado-Vides J."/>
            <person name="Glasner J.D."/>
            <person name="Rode C.K."/>
            <person name="Mayhew G.F."/>
            <person name="Gregor J."/>
            <person name="Davis N.W."/>
            <person name="Kirkpatrick H.A."/>
            <person name="Goeden M.A."/>
            <person name="Rose D.J."/>
            <person name="Mau B."/>
            <person name="Shao Y."/>
        </authorList>
    </citation>
    <scope>NUCLEOTIDE SEQUENCE [LARGE SCALE GENOMIC DNA]</scope>
    <source>
        <strain>K12 / MG1655 / ATCC 47076</strain>
    </source>
</reference>
<reference key="3">
    <citation type="journal article" date="2006" name="Mol. Syst. Biol.">
        <title>Highly accurate genome sequences of Escherichia coli K-12 strains MG1655 and W3110.</title>
        <authorList>
            <person name="Hayashi K."/>
            <person name="Morooka N."/>
            <person name="Yamamoto Y."/>
            <person name="Fujita K."/>
            <person name="Isono K."/>
            <person name="Choi S."/>
            <person name="Ohtsubo E."/>
            <person name="Baba T."/>
            <person name="Wanner B.L."/>
            <person name="Mori H."/>
            <person name="Horiuchi T."/>
        </authorList>
    </citation>
    <scope>NUCLEOTIDE SEQUENCE [LARGE SCALE GENOMIC DNA]</scope>
    <source>
        <strain>K12 / W3110 / ATCC 27325 / DSM 5911</strain>
    </source>
</reference>
<reference key="4">
    <citation type="journal article" date="1997" name="Electrophoresis">
        <title>Comparing the predicted and observed properties of proteins encoded in the genome of Escherichia coli K-12.</title>
        <authorList>
            <person name="Link A.J."/>
            <person name="Robison K."/>
            <person name="Church G.M."/>
        </authorList>
    </citation>
    <scope>PROTEIN SEQUENCE OF 2-13</scope>
    <source>
        <strain>K12 / EMG2</strain>
    </source>
</reference>
<reference key="5">
    <citation type="journal article" date="1972" name="Biochemistry">
        <title>Role of an allosteric effector. Guanosine triphosphate activation in cytosine triphosphate synthetase.</title>
        <authorList>
            <person name="Levitzki A."/>
            <person name="Koshland D.E. Jr."/>
        </authorList>
    </citation>
    <scope>CATALYTIC ACTIVITY</scope>
    <scope>ACTIVITY REGULATION</scope>
</reference>
<reference key="6">
    <citation type="journal article" date="1972" name="Biochemistry">
        <title>Ligand-induced dimer-to-tetramer transformation in cytosine triphosphate synthetase.</title>
        <authorList>
            <person name="Levitzki A."/>
            <person name="Koshland D.E. Jr."/>
        </authorList>
    </citation>
    <scope>SUBUNIT</scope>
</reference>
<reference key="7">
    <citation type="journal article" date="1987" name="J. Bacteriol.">
        <title>Structural role for a conserved region in the CTP synthetase glutamine amide transfer domain.</title>
        <authorList>
            <person name="Weng M."/>
            <person name="Zalkin H."/>
        </authorList>
    </citation>
    <scope>DOMAIN</scope>
    <scope>MUTAGENESIS OF VAL-349 AND GLY-352</scope>
</reference>
<reference key="8">
    <citation type="journal article" date="1993" name="Biochemistry">
        <title>Characterization of metal ion activation and inhibition of CTP synthetase.</title>
        <authorList>
            <person name="Robertson J.G."/>
            <person name="Villafranca J.J."/>
        </authorList>
    </citation>
    <scope>FUNCTION</scope>
    <scope>CATALYTIC ACTIVITY</scope>
    <scope>ACTIVITY REGULATION</scope>
    <scope>BIOPHYSICOCHEMICAL PROPERTIES</scope>
</reference>
<reference key="9">
    <citation type="journal article" date="1997" name="Electrophoresis">
        <title>Escherichia coli proteome analysis using the gene-protein database.</title>
        <authorList>
            <person name="VanBogelen R.A."/>
            <person name="Abshire K.Z."/>
            <person name="Moldover B."/>
            <person name="Olson E.R."/>
            <person name="Neidhardt F.C."/>
        </authorList>
    </citation>
    <scope>IDENTIFICATION BY 2D-GEL</scope>
</reference>
<reference key="10">
    <citation type="journal article" date="2001" name="Biochem. J.">
        <title>Inhibition of Escherichia coli CTP synthase by glutamate gamma-semialdehyde and the role of the allosteric effector GTP in glutamine hydrolysis.</title>
        <authorList>
            <person name="Bearne S.L."/>
            <person name="Hekmat O."/>
            <person name="MacDonnell J.E."/>
        </authorList>
    </citation>
    <scope>FUNCTION</scope>
    <scope>CATALYTIC ACTIVITY</scope>
    <scope>BIOPHYSICOCHEMICAL PROPERTIES</scope>
    <scope>ACTIVITY REGULATION</scope>
    <scope>MUTAGENESIS OF CYS-379</scope>
    <scope>ACTIVE SITE</scope>
</reference>
<reference key="11">
    <citation type="journal article" date="2020" name="J. Genet. Genomics">
        <title>CTP synthase forms cytoophidia in archaea.</title>
        <authorList>
            <person name="Zhou S."/>
            <person name="Xiang H."/>
            <person name="Liu J.L."/>
        </authorList>
    </citation>
    <scope>SUBCELLULAR LOCATION</scope>
    <source>
        <strain>B / BL21-DE3 / Transetta</strain>
    </source>
</reference>
<reference key="12">
    <citation type="journal article" date="2004" name="Biochemistry">
        <title>Crystal structure of Escherichia coli cytidine triphosphate synthetase, a nucleotide-regulated glutamine amidotransferase/ATP-dependent amidoligase fusion protein and homologue of anticancer and antiparasitic drug targets.</title>
        <authorList>
            <person name="Endrizzi J.A."/>
            <person name="Kim H."/>
            <person name="Anderson P.M."/>
            <person name="Baldwin E.P."/>
        </authorList>
    </citation>
    <scope>X-RAY CRYSTALLOGRAPHY (2.30 ANGSTROMS)</scope>
    <scope>FUNCTION</scope>
    <scope>DOMAIN</scope>
    <scope>ACTIVE SITE</scope>
</reference>
<reference key="13">
    <citation type="journal article" date="2005" name="Biochemistry">
        <title>Mechanisms of product feedback regulation and drug resistance in cytidine triphosphate synthetases from the structure of a CTP-inhibited complex.</title>
        <authorList>
            <person name="Endrizzi J.A."/>
            <person name="Kim H."/>
            <person name="Anderson P.M."/>
            <person name="Baldwin E.P."/>
        </authorList>
    </citation>
    <scope>X-RAY CRYSTALLOGRAPHY (2.80 ANGSTROMS) IN COMPLEX WITH ADP; CTP AND MAGNESIUM</scope>
    <scope>ACTIVITY REGULATION</scope>
</reference>
<comment type="function">
    <text evidence="2 8 15">Catalyzes the ATP-dependent amination of UTP to CTP with either L-glutamine or ammonia as the source of nitrogen. Regulates intracellular CTP levels through interactions with the four ribonucleotide triphosphates.</text>
</comment>
<comment type="catalytic activity">
    <reaction evidence="2 6 8">
        <text>UTP + L-glutamine + ATP + H2O = CTP + L-glutamate + ADP + phosphate + 2 H(+)</text>
        <dbReference type="Rhea" id="RHEA:26426"/>
        <dbReference type="ChEBI" id="CHEBI:15377"/>
        <dbReference type="ChEBI" id="CHEBI:15378"/>
        <dbReference type="ChEBI" id="CHEBI:29985"/>
        <dbReference type="ChEBI" id="CHEBI:30616"/>
        <dbReference type="ChEBI" id="CHEBI:37563"/>
        <dbReference type="ChEBI" id="CHEBI:43474"/>
        <dbReference type="ChEBI" id="CHEBI:46398"/>
        <dbReference type="ChEBI" id="CHEBI:58359"/>
        <dbReference type="ChEBI" id="CHEBI:456216"/>
        <dbReference type="EC" id="6.3.4.2"/>
    </reaction>
</comment>
<comment type="catalytic activity">
    <reaction evidence="2 19">
        <text>L-glutamine + H2O = L-glutamate + NH4(+)</text>
        <dbReference type="Rhea" id="RHEA:15889"/>
        <dbReference type="ChEBI" id="CHEBI:15377"/>
        <dbReference type="ChEBI" id="CHEBI:28938"/>
        <dbReference type="ChEBI" id="CHEBI:29985"/>
        <dbReference type="ChEBI" id="CHEBI:58359"/>
    </reaction>
</comment>
<comment type="catalytic activity">
    <reaction evidence="2 8">
        <text>UTP + NH4(+) + ATP = CTP + ADP + phosphate + 2 H(+)</text>
        <dbReference type="Rhea" id="RHEA:16597"/>
        <dbReference type="ChEBI" id="CHEBI:15378"/>
        <dbReference type="ChEBI" id="CHEBI:28938"/>
        <dbReference type="ChEBI" id="CHEBI:30616"/>
        <dbReference type="ChEBI" id="CHEBI:37563"/>
        <dbReference type="ChEBI" id="CHEBI:43474"/>
        <dbReference type="ChEBI" id="CHEBI:46398"/>
        <dbReference type="ChEBI" id="CHEBI:456216"/>
    </reaction>
</comment>
<comment type="activity regulation">
    <text evidence="2 6 8 16">Allosterically activated by GTP, when glutamine is the substrate; GTP has no effect on the reaction when ammonia is the substrate (PubMed:4550559). The allosteric effector GTP functions by stabilizing the protein conformation that binds the tetrahedral intermediate(s) formed during glutamine hydrolysis (PubMed:11336655). Also activated by magnesium; the enzyme requires more Mg(2+) for full catalytic activity than required simply to complex the nucleotide substrates (PubMed:8385490). Inhibited by the product CTP, via allosteric rather than competitive inhibition (PubMed:16216072, PubMed:8385490). Also inhibited by divalent metal ions such as copper and zinc (PubMed:8385490). Is potently inhibited by the intermediate analog inhibitor glutamate gamma-semialdehyde (PubMed:11336655).</text>
</comment>
<comment type="biophysicochemical properties">
    <kinetics>
        <KM evidence="2">2 mM for ammonia</KM>
        <KM evidence="2">0.3 mM for L-glutamine (in the presence of 0.25 mM GTP)</KM>
        <text evidence="2">kcat is 13 sec(-1) with ammonia as substrate. kcat is 6.6 sec(-1) with L-glutamine as substrate (in the presence of 0.25 mM GTP).</text>
    </kinetics>
    <phDependence>
        <text evidence="8">Optimum pH is 8.7.</text>
    </phDependence>
</comment>
<comment type="pathway">
    <text evidence="1">Pyrimidine metabolism; CTP biosynthesis via de novo pathway; CTP from UDP: step 2/2.</text>
</comment>
<comment type="subunit">
    <text evidence="7">Homodimer that associates to form homotetramer in the presence of ATP and UTP. The substrate nucleotides ATP and UTP act synergistically to promote oligomerization of CTPS from inactive dimers to active tetramers.</text>
</comment>
<comment type="subcellular location">
    <subcellularLocation>
        <location evidence="4">Cytoplasm</location>
    </subcellularLocation>
    <text evidence="4">Localizes to the cytoophidium, a subcellular filamentary structure where CTP synthase is compartmentalized. Many cells form cytoophidia which are observed in stationary phase.</text>
</comment>
<comment type="domain">
    <text evidence="15 17 18">Sequence consists of two domains: the C-terminal glutamine amide transfer (GAT) domain catalyzes the hydrolysis of glutamine; the N-terminal synthase domain catalyzes the amination of UTP (PubMed:3298209, PubMed:3514618). Structure shows each subunit consists of three distinct segments: the N-terminal amidoligase (ALase) domain, which mediates oligomerization and contains the ALase active site where ATP and UTP substrates bind, and an interrupted helical interdomain linker segment that connects the ALase domain to the Type I glutamine amidotransferase (GATase) C-terminal domain, which generates ammonia via glutamine hydrolysis (PubMed:15157079). A gated channel that spans 25 Angstroms between the glutamine hydrolysis and amidoligase active sites provides a path for ammonia diffusion; the channel is accessible to solvent at the base of a cleft adjoining the glutamine hydrolysis active site, providing an entry point for exogenous ammonia (PubMed:15157079).</text>
</comment>
<comment type="miscellaneous">
    <text evidence="16">CTPSs have evolved a hybrid strategy for distinguishing between UTP and CTP. The overlapping regions of the product feedback inhibitory and substrate sites recognize a common feature in both compounds, the triphosphate moiety. To differentiate isosteric substrate and product pyrimidine rings, an additional pocket far from the expected kinase/ligase catalytic site, specifically recognizes the cytosine and ribose portions of the product inhibitor.</text>
</comment>
<comment type="similarity">
    <text evidence="1">Belongs to the CTP synthase family.</text>
</comment>
<feature type="initiator methionine" description="Removed" evidence="9">
    <location>
        <position position="1"/>
    </location>
</feature>
<feature type="chain" id="PRO_0000138183" description="CTP synthase">
    <location>
        <begin position="2"/>
        <end position="545"/>
    </location>
</feature>
<feature type="domain" description="Glutamine amidotransferase type-1" evidence="1">
    <location>
        <begin position="291"/>
        <end position="542"/>
    </location>
</feature>
<feature type="region of interest" description="Amidoligase domain" evidence="15">
    <location>
        <begin position="2"/>
        <end position="266"/>
    </location>
</feature>
<feature type="active site" description="Nucleophile; for glutamine hydrolysis" evidence="14 15">
    <location>
        <position position="379"/>
    </location>
</feature>
<feature type="active site" evidence="15">
    <location>
        <position position="515"/>
    </location>
</feature>
<feature type="active site" evidence="15">
    <location>
        <position position="517"/>
    </location>
</feature>
<feature type="binding site" evidence="16">
    <location>
        <position position="14"/>
    </location>
    <ligand>
        <name>CTP</name>
        <dbReference type="ChEBI" id="CHEBI:37563"/>
        <note>allosteric inhibitor</note>
    </ligand>
</feature>
<feature type="binding site" evidence="16">
    <location>
        <position position="14"/>
    </location>
    <ligand>
        <name>UTP</name>
        <dbReference type="ChEBI" id="CHEBI:46398"/>
    </ligand>
</feature>
<feature type="binding site" evidence="16 20">
    <location>
        <begin position="15"/>
        <end position="20"/>
    </location>
    <ligand>
        <name>ATP</name>
        <dbReference type="ChEBI" id="CHEBI:30616"/>
    </ligand>
</feature>
<feature type="binding site" evidence="16 20">
    <location>
        <position position="72"/>
    </location>
    <ligand>
        <name>ATP</name>
        <dbReference type="ChEBI" id="CHEBI:30616"/>
    </ligand>
</feature>
<feature type="binding site" evidence="3 20">
    <location>
        <position position="72"/>
    </location>
    <ligand>
        <name>Mg(2+)</name>
        <dbReference type="ChEBI" id="CHEBI:18420"/>
    </ligand>
</feature>
<feature type="binding site" evidence="3 20">
    <location>
        <position position="140"/>
    </location>
    <ligand>
        <name>Mg(2+)</name>
        <dbReference type="ChEBI" id="CHEBI:18420"/>
    </ligand>
</feature>
<feature type="binding site" evidence="16 20">
    <location>
        <begin position="147"/>
        <end position="149"/>
    </location>
    <ligand>
        <name>CTP</name>
        <dbReference type="ChEBI" id="CHEBI:37563"/>
        <note>allosteric inhibitor</note>
    </ligand>
</feature>
<feature type="binding site" evidence="16 20">
    <location>
        <begin position="187"/>
        <end position="192"/>
    </location>
    <ligand>
        <name>CTP</name>
        <dbReference type="ChEBI" id="CHEBI:37563"/>
        <note>allosteric inhibitor</note>
    </ligand>
</feature>
<feature type="binding site" evidence="16">
    <location>
        <begin position="187"/>
        <end position="192"/>
    </location>
    <ligand>
        <name>UTP</name>
        <dbReference type="ChEBI" id="CHEBI:46398"/>
    </ligand>
</feature>
<feature type="binding site" evidence="16 20">
    <location>
        <position position="223"/>
    </location>
    <ligand>
        <name>CTP</name>
        <dbReference type="ChEBI" id="CHEBI:37563"/>
        <note>allosteric inhibitor</note>
    </ligand>
</feature>
<feature type="binding site" evidence="16">
    <location>
        <position position="223"/>
    </location>
    <ligand>
        <name>UTP</name>
        <dbReference type="ChEBI" id="CHEBI:46398"/>
    </ligand>
</feature>
<feature type="binding site" evidence="16 20">
    <location>
        <begin position="239"/>
        <end position="241"/>
    </location>
    <ligand>
        <name>ATP</name>
        <dbReference type="ChEBI" id="CHEBI:30616"/>
    </ligand>
</feature>
<feature type="binding site" evidence="1">
    <location>
        <position position="352"/>
    </location>
    <ligand>
        <name>L-glutamine</name>
        <dbReference type="ChEBI" id="CHEBI:58359"/>
    </ligand>
</feature>
<feature type="binding site" evidence="1">
    <location>
        <begin position="380"/>
        <end position="383"/>
    </location>
    <ligand>
        <name>L-glutamine</name>
        <dbReference type="ChEBI" id="CHEBI:58359"/>
    </ligand>
</feature>
<feature type="binding site" evidence="1">
    <location>
        <position position="403"/>
    </location>
    <ligand>
        <name>L-glutamine</name>
        <dbReference type="ChEBI" id="CHEBI:58359"/>
    </ligand>
</feature>
<feature type="binding site" evidence="1">
    <location>
        <position position="470"/>
    </location>
    <ligand>
        <name>L-glutamine</name>
        <dbReference type="ChEBI" id="CHEBI:58359"/>
    </ligand>
</feature>
<feature type="mutagenesis site" description="30% increase in both glutamine-dependent and ammonia-dependent activities." evidence="5">
    <original>V</original>
    <variation>S</variation>
    <location>
        <position position="349"/>
    </location>
</feature>
<feature type="mutagenesis site" description="Loss of glutamine-dependent activity, but no change in ammonia-dependent activity." evidence="5">
    <original>G</original>
    <variation>P</variation>
    <location>
        <position position="352"/>
    </location>
</feature>
<feature type="mutagenesis site" description="Loss of glutamine-dependent activity, but no change in ammonia-dependent activity." evidence="2">
    <original>C</original>
    <variation>A</variation>
    <variation>S</variation>
    <location>
        <position position="379"/>
    </location>
</feature>
<feature type="sequence conflict" description="In Ref. 1; AAA24485." evidence="13" ref="1">
    <original>V</original>
    <variation>L</variation>
    <location>
        <position position="338"/>
    </location>
</feature>
<feature type="sequence conflict" description="In Ref. 1; AAA24485." evidence="13" ref="1">
    <original>M</original>
    <variation>S</variation>
    <location>
        <position position="476"/>
    </location>
</feature>
<feature type="strand" evidence="21">
    <location>
        <begin position="4"/>
        <end position="10"/>
    </location>
</feature>
<feature type="strand" evidence="21">
    <location>
        <begin position="12"/>
        <end position="14"/>
    </location>
</feature>
<feature type="helix" evidence="21">
    <location>
        <begin position="18"/>
        <end position="30"/>
    </location>
</feature>
<feature type="turn" evidence="21">
    <location>
        <begin position="31"/>
        <end position="33"/>
    </location>
</feature>
<feature type="strand" evidence="21">
    <location>
        <begin position="36"/>
        <end position="42"/>
    </location>
</feature>
<feature type="strand" evidence="25">
    <location>
        <begin position="45"/>
        <end position="48"/>
    </location>
</feature>
<feature type="helix" evidence="21">
    <location>
        <begin position="49"/>
        <end position="51"/>
    </location>
</feature>
<feature type="turn" evidence="21">
    <location>
        <begin position="54"/>
        <end position="56"/>
    </location>
</feature>
<feature type="strand" evidence="22">
    <location>
        <begin position="60"/>
        <end position="62"/>
    </location>
</feature>
<feature type="strand" evidence="22">
    <location>
        <begin position="68"/>
        <end position="70"/>
    </location>
</feature>
<feature type="helix" evidence="21">
    <location>
        <begin position="72"/>
        <end position="79"/>
    </location>
</feature>
<feature type="helix" evidence="21">
    <location>
        <begin position="86"/>
        <end position="88"/>
    </location>
</feature>
<feature type="strand" evidence="21">
    <location>
        <begin position="89"/>
        <end position="91"/>
    </location>
</feature>
<feature type="helix" evidence="21">
    <location>
        <begin position="92"/>
        <end position="104"/>
    </location>
</feature>
<feature type="turn" evidence="21">
    <location>
        <begin position="105"/>
        <end position="110"/>
    </location>
</feature>
<feature type="helix" evidence="21">
    <location>
        <begin position="115"/>
        <end position="131"/>
    </location>
</feature>
<feature type="strand" evidence="21">
    <location>
        <begin position="135"/>
        <end position="141"/>
    </location>
</feature>
<feature type="helix" evidence="24">
    <location>
        <begin position="148"/>
        <end position="150"/>
    </location>
</feature>
<feature type="helix" evidence="21">
    <location>
        <begin position="151"/>
        <end position="164"/>
    </location>
</feature>
<feature type="strand" evidence="21">
    <location>
        <begin position="168"/>
        <end position="176"/>
    </location>
</feature>
<feature type="turn" evidence="21">
    <location>
        <begin position="181"/>
        <end position="184"/>
    </location>
</feature>
<feature type="helix" evidence="21">
    <location>
        <begin position="189"/>
        <end position="199"/>
    </location>
</feature>
<feature type="turn" evidence="21">
    <location>
        <begin position="200"/>
        <end position="202"/>
    </location>
</feature>
<feature type="strand" evidence="21">
    <location>
        <begin position="206"/>
        <end position="214"/>
    </location>
</feature>
<feature type="helix" evidence="21">
    <location>
        <begin position="218"/>
        <end position="226"/>
    </location>
</feature>
<feature type="helix" evidence="24">
    <location>
        <begin position="232"/>
        <end position="234"/>
    </location>
</feature>
<feature type="strand" evidence="21">
    <location>
        <begin position="235"/>
        <end position="239"/>
    </location>
</feature>
<feature type="helix" evidence="21">
    <location>
        <begin position="244"/>
        <end position="246"/>
    </location>
</feature>
<feature type="helix" evidence="21">
    <location>
        <begin position="247"/>
        <end position="253"/>
    </location>
</feature>
<feature type="helix" evidence="21">
    <location>
        <begin position="256"/>
        <end position="263"/>
    </location>
</feature>
<feature type="helix" evidence="21">
    <location>
        <begin position="274"/>
        <end position="284"/>
    </location>
</feature>
<feature type="strand" evidence="21">
    <location>
        <begin position="287"/>
        <end position="298"/>
    </location>
</feature>
<feature type="helix" evidence="21">
    <location>
        <begin position="302"/>
        <end position="305"/>
    </location>
</feature>
<feature type="helix" evidence="21">
    <location>
        <begin position="306"/>
        <end position="318"/>
    </location>
</feature>
<feature type="strand" evidence="21">
    <location>
        <begin position="321"/>
        <end position="329"/>
    </location>
</feature>
<feature type="helix" evidence="21">
    <location>
        <begin position="330"/>
        <end position="336"/>
    </location>
</feature>
<feature type="turn" evidence="21">
    <location>
        <begin position="338"/>
        <end position="343"/>
    </location>
</feature>
<feature type="strand" evidence="21">
    <location>
        <begin position="345"/>
        <end position="349"/>
    </location>
</feature>
<feature type="helix" evidence="21">
    <location>
        <begin position="358"/>
        <end position="370"/>
    </location>
</feature>
<feature type="strand" evidence="21">
    <location>
        <begin position="375"/>
        <end position="378"/>
    </location>
</feature>
<feature type="helix" evidence="21">
    <location>
        <begin position="380"/>
        <end position="394"/>
    </location>
</feature>
<feature type="turn" evidence="21">
    <location>
        <begin position="402"/>
        <end position="404"/>
    </location>
</feature>
<feature type="strand" evidence="21">
    <location>
        <begin position="411"/>
        <end position="414"/>
    </location>
</feature>
<feature type="turn" evidence="21">
    <location>
        <begin position="416"/>
        <end position="418"/>
    </location>
</feature>
<feature type="strand" evidence="23">
    <location>
        <begin position="422"/>
        <end position="424"/>
    </location>
</feature>
<feature type="strand" evidence="21">
    <location>
        <begin position="440"/>
        <end position="448"/>
    </location>
</feature>
<feature type="helix" evidence="21">
    <location>
        <begin position="453"/>
        <end position="457"/>
    </location>
</feature>
<feature type="strand" evidence="21">
    <location>
        <begin position="460"/>
        <end position="469"/>
    </location>
</feature>
<feature type="helix" evidence="21">
    <location>
        <begin position="475"/>
        <end position="483"/>
    </location>
</feature>
<feature type="strand" evidence="21">
    <location>
        <begin position="487"/>
        <end position="491"/>
    </location>
</feature>
<feature type="strand" evidence="21">
    <location>
        <begin position="493"/>
        <end position="495"/>
    </location>
</feature>
<feature type="strand" evidence="21">
    <location>
        <begin position="498"/>
        <end position="502"/>
    </location>
</feature>
<feature type="strand" evidence="21">
    <location>
        <begin position="506"/>
        <end position="514"/>
    </location>
</feature>
<feature type="helix" evidence="21">
    <location>
        <begin position="516"/>
        <end position="518"/>
    </location>
</feature>
<feature type="turn" evidence="21">
    <location>
        <begin position="522"/>
        <end position="524"/>
    </location>
</feature>
<feature type="helix" evidence="21">
    <location>
        <begin position="527"/>
        <end position="542"/>
    </location>
</feature>
<keyword id="KW-0002">3D-structure</keyword>
<keyword id="KW-0067">ATP-binding</keyword>
<keyword id="KW-0963">Cytoplasm</keyword>
<keyword id="KW-0903">Direct protein sequencing</keyword>
<keyword id="KW-0315">Glutamine amidotransferase</keyword>
<keyword id="KW-0436">Ligase</keyword>
<keyword id="KW-0460">Magnesium</keyword>
<keyword id="KW-0479">Metal-binding</keyword>
<keyword id="KW-0547">Nucleotide-binding</keyword>
<keyword id="KW-0665">Pyrimidine biosynthesis</keyword>
<keyword id="KW-1185">Reference proteome</keyword>
<dbReference type="EC" id="6.3.4.2" evidence="2 6 8"/>
<dbReference type="EMBL" id="M12843">
    <property type="protein sequence ID" value="AAA24485.1"/>
    <property type="molecule type" value="mRNA"/>
</dbReference>
<dbReference type="EMBL" id="U29580">
    <property type="protein sequence ID" value="AAA69290.1"/>
    <property type="molecule type" value="Genomic_DNA"/>
</dbReference>
<dbReference type="EMBL" id="U00096">
    <property type="protein sequence ID" value="AAC75822.1"/>
    <property type="molecule type" value="Genomic_DNA"/>
</dbReference>
<dbReference type="EMBL" id="AP009048">
    <property type="protein sequence ID" value="BAE76854.1"/>
    <property type="molecule type" value="Genomic_DNA"/>
</dbReference>
<dbReference type="PIR" id="H65059">
    <property type="entry name" value="SYECTP"/>
</dbReference>
<dbReference type="RefSeq" id="NP_417260.1">
    <property type="nucleotide sequence ID" value="NC_000913.3"/>
</dbReference>
<dbReference type="RefSeq" id="WP_000210878.1">
    <property type="nucleotide sequence ID" value="NZ_STEB01000030.1"/>
</dbReference>
<dbReference type="PDB" id="1S1M">
    <property type="method" value="X-ray"/>
    <property type="resolution" value="2.30 A"/>
    <property type="chains" value="A/B=1-545"/>
</dbReference>
<dbReference type="PDB" id="2AD5">
    <property type="method" value="X-ray"/>
    <property type="resolution" value="2.80 A"/>
    <property type="chains" value="A/B=1-545"/>
</dbReference>
<dbReference type="PDB" id="5TKV">
    <property type="method" value="X-ray"/>
    <property type="resolution" value="2.70 A"/>
    <property type="chains" value="A/B=1-545"/>
</dbReference>
<dbReference type="PDB" id="5U05">
    <property type="method" value="EM"/>
    <property type="resolution" value="7.90 A"/>
    <property type="chains" value="A/B/C/D=1-545"/>
</dbReference>
<dbReference type="PDB" id="5U3C">
    <property type="method" value="EM"/>
    <property type="resolution" value="4.60 A"/>
    <property type="chains" value="A/B/C/D=1-545"/>
</dbReference>
<dbReference type="PDB" id="5U6R">
    <property type="method" value="EM"/>
    <property type="resolution" value="5.70 A"/>
    <property type="chains" value="A/B/C/D=1-545"/>
</dbReference>
<dbReference type="PDB" id="8FV6">
    <property type="method" value="X-ray"/>
    <property type="resolution" value="2.25 A"/>
    <property type="chains" value="AAA/BBB=1-545"/>
</dbReference>
<dbReference type="PDB" id="8FV7">
    <property type="method" value="X-ray"/>
    <property type="resolution" value="2.08 A"/>
    <property type="chains" value="AAA/BBB=1-545"/>
</dbReference>
<dbReference type="PDB" id="8FV8">
    <property type="method" value="X-ray"/>
    <property type="resolution" value="2.05 A"/>
    <property type="chains" value="AAA/BBB=1-545"/>
</dbReference>
<dbReference type="PDB" id="8FV9">
    <property type="method" value="X-ray"/>
    <property type="resolution" value="1.99 A"/>
    <property type="chains" value="AAA/BBB=1-545"/>
</dbReference>
<dbReference type="PDB" id="8FVA">
    <property type="method" value="X-ray"/>
    <property type="resolution" value="2.40 A"/>
    <property type="chains" value="AAA/BBB=1-545"/>
</dbReference>
<dbReference type="PDB" id="8FVB">
    <property type="method" value="X-ray"/>
    <property type="resolution" value="2.03 A"/>
    <property type="chains" value="AAA/BBB=1-545"/>
</dbReference>
<dbReference type="PDB" id="8FVC">
    <property type="method" value="X-ray"/>
    <property type="resolution" value="2.28 A"/>
    <property type="chains" value="AAA/BBB=1-545"/>
</dbReference>
<dbReference type="PDB" id="8FVD">
    <property type="method" value="X-ray"/>
    <property type="resolution" value="2.38 A"/>
    <property type="chains" value="A/B=1-545"/>
</dbReference>
<dbReference type="PDB" id="8FVE">
    <property type="method" value="X-ray"/>
    <property type="resolution" value="2.40 A"/>
    <property type="chains" value="A/B=1-545"/>
</dbReference>
<dbReference type="PDB" id="8I9O">
    <property type="method" value="EM"/>
    <property type="resolution" value="2.90 A"/>
    <property type="chains" value="A/B/C/D=1-544"/>
</dbReference>
<dbReference type="PDB" id="8SBR">
    <property type="method" value="X-ray"/>
    <property type="resolution" value="2.59 A"/>
    <property type="chains" value="A/B=1-545"/>
</dbReference>
<dbReference type="PDBsum" id="1S1M"/>
<dbReference type="PDBsum" id="2AD5"/>
<dbReference type="PDBsum" id="5TKV"/>
<dbReference type="PDBsum" id="5U05"/>
<dbReference type="PDBsum" id="5U3C"/>
<dbReference type="PDBsum" id="5U6R"/>
<dbReference type="PDBsum" id="8FV6"/>
<dbReference type="PDBsum" id="8FV7"/>
<dbReference type="PDBsum" id="8FV8"/>
<dbReference type="PDBsum" id="8FV9"/>
<dbReference type="PDBsum" id="8FVA"/>
<dbReference type="PDBsum" id="8FVB"/>
<dbReference type="PDBsum" id="8FVC"/>
<dbReference type="PDBsum" id="8FVD"/>
<dbReference type="PDBsum" id="8FVE"/>
<dbReference type="PDBsum" id="8I9O"/>
<dbReference type="PDBsum" id="8SBR"/>
<dbReference type="SMR" id="P0A7E5"/>
<dbReference type="BioGRID" id="4262298">
    <property type="interactions" value="14"/>
</dbReference>
<dbReference type="DIP" id="DIP-10628N"/>
<dbReference type="FunCoup" id="P0A7E5">
    <property type="interactions" value="729"/>
</dbReference>
<dbReference type="IntAct" id="P0A7E5">
    <property type="interactions" value="8"/>
</dbReference>
<dbReference type="STRING" id="511145.b2780"/>
<dbReference type="MEROPS" id="C26.964"/>
<dbReference type="jPOST" id="P0A7E5"/>
<dbReference type="PaxDb" id="511145-b2780"/>
<dbReference type="EnsemblBacteria" id="AAC75822">
    <property type="protein sequence ID" value="AAC75822"/>
    <property type="gene ID" value="b2780"/>
</dbReference>
<dbReference type="GeneID" id="93779218"/>
<dbReference type="GeneID" id="946116"/>
<dbReference type="KEGG" id="ecj:JW2751"/>
<dbReference type="KEGG" id="eco:b2780"/>
<dbReference type="KEGG" id="ecoc:C3026_15275"/>
<dbReference type="PATRIC" id="fig|1411691.4.peg.3955"/>
<dbReference type="EchoBASE" id="EB0803"/>
<dbReference type="eggNOG" id="COG0504">
    <property type="taxonomic scope" value="Bacteria"/>
</dbReference>
<dbReference type="HOGENOM" id="CLU_011675_5_0_6"/>
<dbReference type="InParanoid" id="P0A7E5"/>
<dbReference type="OMA" id="EFNNAYR"/>
<dbReference type="OrthoDB" id="9801107at2"/>
<dbReference type="PhylomeDB" id="P0A7E5"/>
<dbReference type="BioCyc" id="EcoCyc:CTPSYN-MONOMER"/>
<dbReference type="BioCyc" id="MetaCyc:CTPSYN-MONOMER"/>
<dbReference type="BRENDA" id="6.3.4.2">
    <property type="organism ID" value="2026"/>
</dbReference>
<dbReference type="SABIO-RK" id="P0A7E5"/>
<dbReference type="UniPathway" id="UPA00159">
    <property type="reaction ID" value="UER00277"/>
</dbReference>
<dbReference type="EvolutionaryTrace" id="P0A7E5"/>
<dbReference type="PRO" id="PR:P0A7E5"/>
<dbReference type="Proteomes" id="UP000000625">
    <property type="component" value="Chromosome"/>
</dbReference>
<dbReference type="GO" id="GO:0097268">
    <property type="term" value="C:cytoophidium"/>
    <property type="evidence" value="ECO:0000314"/>
    <property type="project" value="UniProtKB"/>
</dbReference>
<dbReference type="GO" id="GO:0005829">
    <property type="term" value="C:cytosol"/>
    <property type="evidence" value="ECO:0000314"/>
    <property type="project" value="EcoCyc"/>
</dbReference>
<dbReference type="GO" id="GO:0032991">
    <property type="term" value="C:protein-containing complex"/>
    <property type="evidence" value="ECO:0000314"/>
    <property type="project" value="EcoCyc"/>
</dbReference>
<dbReference type="GO" id="GO:0005524">
    <property type="term" value="F:ATP binding"/>
    <property type="evidence" value="ECO:0007669"/>
    <property type="project" value="UniProtKB-KW"/>
</dbReference>
<dbReference type="GO" id="GO:0003883">
    <property type="term" value="F:CTP synthase activity"/>
    <property type="evidence" value="ECO:0000314"/>
    <property type="project" value="EcoCyc"/>
</dbReference>
<dbReference type="GO" id="GO:0004359">
    <property type="term" value="F:glutaminase activity"/>
    <property type="evidence" value="ECO:0007669"/>
    <property type="project" value="RHEA"/>
</dbReference>
<dbReference type="GO" id="GO:0042802">
    <property type="term" value="F:identical protein binding"/>
    <property type="evidence" value="ECO:0000314"/>
    <property type="project" value="EcoCyc"/>
</dbReference>
<dbReference type="GO" id="GO:0000287">
    <property type="term" value="F:magnesium ion binding"/>
    <property type="evidence" value="ECO:0000314"/>
    <property type="project" value="EcoCyc"/>
</dbReference>
<dbReference type="GO" id="GO:0044210">
    <property type="term" value="P:'de novo' CTP biosynthetic process"/>
    <property type="evidence" value="ECO:0007669"/>
    <property type="project" value="UniProtKB-UniRule"/>
</dbReference>
<dbReference type="GO" id="GO:0006241">
    <property type="term" value="P:CTP biosynthetic process"/>
    <property type="evidence" value="ECO:0000314"/>
    <property type="project" value="EcoCyc"/>
</dbReference>
<dbReference type="GO" id="GO:0051289">
    <property type="term" value="P:protein homotetramerization"/>
    <property type="evidence" value="ECO:0000314"/>
    <property type="project" value="EcoCyc"/>
</dbReference>
<dbReference type="GO" id="GO:0019856">
    <property type="term" value="P:pyrimidine nucleobase biosynthetic process"/>
    <property type="evidence" value="ECO:0000318"/>
    <property type="project" value="GO_Central"/>
</dbReference>
<dbReference type="CDD" id="cd03113">
    <property type="entry name" value="CTPS_N"/>
    <property type="match status" value="1"/>
</dbReference>
<dbReference type="CDD" id="cd01746">
    <property type="entry name" value="GATase1_CTP_Synthase"/>
    <property type="match status" value="1"/>
</dbReference>
<dbReference type="FunFam" id="3.40.50.300:FF:000009">
    <property type="entry name" value="CTP synthase"/>
    <property type="match status" value="1"/>
</dbReference>
<dbReference type="FunFam" id="3.40.50.880:FF:000002">
    <property type="entry name" value="CTP synthase"/>
    <property type="match status" value="1"/>
</dbReference>
<dbReference type="Gene3D" id="3.40.50.880">
    <property type="match status" value="1"/>
</dbReference>
<dbReference type="Gene3D" id="3.40.50.300">
    <property type="entry name" value="P-loop containing nucleotide triphosphate hydrolases"/>
    <property type="match status" value="1"/>
</dbReference>
<dbReference type="HAMAP" id="MF_01227">
    <property type="entry name" value="PyrG"/>
    <property type="match status" value="1"/>
</dbReference>
<dbReference type="InterPro" id="IPR029062">
    <property type="entry name" value="Class_I_gatase-like"/>
</dbReference>
<dbReference type="InterPro" id="IPR004468">
    <property type="entry name" value="CTP_synthase"/>
</dbReference>
<dbReference type="InterPro" id="IPR017456">
    <property type="entry name" value="CTP_synthase_N"/>
</dbReference>
<dbReference type="InterPro" id="IPR017926">
    <property type="entry name" value="GATASE"/>
</dbReference>
<dbReference type="InterPro" id="IPR033828">
    <property type="entry name" value="GATase1_CTP_Synthase"/>
</dbReference>
<dbReference type="InterPro" id="IPR027417">
    <property type="entry name" value="P-loop_NTPase"/>
</dbReference>
<dbReference type="NCBIfam" id="NF003792">
    <property type="entry name" value="PRK05380.1"/>
    <property type="match status" value="1"/>
</dbReference>
<dbReference type="NCBIfam" id="TIGR00337">
    <property type="entry name" value="PyrG"/>
    <property type="match status" value="1"/>
</dbReference>
<dbReference type="PANTHER" id="PTHR11550">
    <property type="entry name" value="CTP SYNTHASE"/>
    <property type="match status" value="1"/>
</dbReference>
<dbReference type="PANTHER" id="PTHR11550:SF0">
    <property type="entry name" value="CTP SYNTHASE-RELATED"/>
    <property type="match status" value="1"/>
</dbReference>
<dbReference type="Pfam" id="PF06418">
    <property type="entry name" value="CTP_synth_N"/>
    <property type="match status" value="1"/>
</dbReference>
<dbReference type="Pfam" id="PF00117">
    <property type="entry name" value="GATase"/>
    <property type="match status" value="1"/>
</dbReference>
<dbReference type="SUPFAM" id="SSF52317">
    <property type="entry name" value="Class I glutamine amidotransferase-like"/>
    <property type="match status" value="1"/>
</dbReference>
<dbReference type="SUPFAM" id="SSF52540">
    <property type="entry name" value="P-loop containing nucleoside triphosphate hydrolases"/>
    <property type="match status" value="1"/>
</dbReference>
<dbReference type="PROSITE" id="PS51273">
    <property type="entry name" value="GATASE_TYPE_1"/>
    <property type="match status" value="1"/>
</dbReference>
<name>PYRG_ECOLI</name>
<organism>
    <name type="scientific">Escherichia coli (strain K12)</name>
    <dbReference type="NCBI Taxonomy" id="83333"/>
    <lineage>
        <taxon>Bacteria</taxon>
        <taxon>Pseudomonadati</taxon>
        <taxon>Pseudomonadota</taxon>
        <taxon>Gammaproteobacteria</taxon>
        <taxon>Enterobacterales</taxon>
        <taxon>Enterobacteriaceae</taxon>
        <taxon>Escherichia</taxon>
    </lineage>
</organism>
<gene>
    <name evidence="12" type="primary">pyrG</name>
    <name type="ordered locus">b2780</name>
    <name type="ordered locus">JW2751</name>
</gene>
<accession>P0A7E5</accession>
<accession>P08398</accession>
<accession>Q2MA52</accession>
<protein>
    <recommendedName>
        <fullName evidence="10">CTP synthase</fullName>
        <ecNumber evidence="2 6 8">6.3.4.2</ecNumber>
    </recommendedName>
    <alternativeName>
        <fullName evidence="10">Cytidine 5'-triphosphate synthase</fullName>
    </alternativeName>
    <alternativeName>
        <fullName evidence="11">Cytidine triphosphate synthetase</fullName>
        <shortName evidence="12">CTP synthetase</shortName>
        <shortName evidence="11">CTPS</shortName>
    </alternativeName>
    <alternativeName>
        <fullName>UTP--ammonia ligase</fullName>
    </alternativeName>
</protein>
<proteinExistence type="evidence at protein level"/>
<sequence>MTTNYIFVTGGVVSSLGKGIAAASLAAILEARGLNVTIMKLDPYINVDPGTMSPIQHGEVFVTEDGAETDLDLGHYERFIRTKMSRRNNFTTGRIYSDVLRKERRGDYLGATVQVIPHITNAIKERVLEGGEGHDVVLVEIGGTVGDIESLPFLEAIRQMAVEIGREHTLFMHLTLVPYMAASGEVKTKPTQHSVKELLSIGIQPDILICRSDRAVPANERAKIALFCNVPEKAVISLKDVDSIYKIPGLLKSQGLDDYICKRFSLNCPEANLSEWEQVIFEEANPVSEVTIGMVGKYIELPDAYKSVIEALKHGGLKNRVSVNIKLIDSQDVETRGVEILKGLDAILVPGGFGYRGVEGMITTARFARENNIPYLGICLGMQVALIDYARHVANMENANSTEFVPDCKYPVVALITEWRDENGNVEVRSEKSDLGGTMRLGAQQCQLVDDSLVRQLYNAPTIVERHRHRYEVNNMLLKQIEDAGLRVAGRSGDDQLVEIIEVPNHPWFVACQFHPEFTSTPRDGHPLFAGFVKAASEFQKRQAK</sequence>
<evidence type="ECO:0000255" key="1">
    <source>
        <dbReference type="HAMAP-Rule" id="MF_01227"/>
    </source>
</evidence>
<evidence type="ECO:0000269" key="2">
    <source>
    </source>
</evidence>
<evidence type="ECO:0000269" key="3">
    <source>
    </source>
</evidence>
<evidence type="ECO:0000269" key="4">
    <source>
    </source>
</evidence>
<evidence type="ECO:0000269" key="5">
    <source>
    </source>
</evidence>
<evidence type="ECO:0000269" key="6">
    <source>
    </source>
</evidence>
<evidence type="ECO:0000269" key="7">
    <source>
    </source>
</evidence>
<evidence type="ECO:0000269" key="8">
    <source>
    </source>
</evidence>
<evidence type="ECO:0000269" key="9">
    <source>
    </source>
</evidence>
<evidence type="ECO:0000303" key="10">
    <source>
    </source>
</evidence>
<evidence type="ECO:0000303" key="11">
    <source>
    </source>
</evidence>
<evidence type="ECO:0000303" key="12">
    <source>
    </source>
</evidence>
<evidence type="ECO:0000305" key="13"/>
<evidence type="ECO:0000305" key="14">
    <source>
    </source>
</evidence>
<evidence type="ECO:0000305" key="15">
    <source>
    </source>
</evidence>
<evidence type="ECO:0000305" key="16">
    <source>
    </source>
</evidence>
<evidence type="ECO:0000305" key="17">
    <source>
    </source>
</evidence>
<evidence type="ECO:0000305" key="18">
    <source>
    </source>
</evidence>
<evidence type="ECO:0000305" key="19">
    <source>
    </source>
</evidence>
<evidence type="ECO:0007744" key="20">
    <source>
        <dbReference type="PDB" id="2AD5"/>
    </source>
</evidence>
<evidence type="ECO:0007829" key="21">
    <source>
        <dbReference type="PDB" id="1S1M"/>
    </source>
</evidence>
<evidence type="ECO:0007829" key="22">
    <source>
        <dbReference type="PDB" id="2AD5"/>
    </source>
</evidence>
<evidence type="ECO:0007829" key="23">
    <source>
        <dbReference type="PDB" id="5TKV"/>
    </source>
</evidence>
<evidence type="ECO:0007829" key="24">
    <source>
        <dbReference type="PDB" id="8FVD"/>
    </source>
</evidence>
<evidence type="ECO:0007829" key="25">
    <source>
        <dbReference type="PDB" id="8FVE"/>
    </source>
</evidence>